<sequence length="554" mass="64151">MMLSRAKPAVGGESPHTDKRKKKGRKIPKLEDLLSQRDFTGAITLLEFKRHVGEQEDDTNLWIGYCAFHLGDYKRALEEYENATKEENCNPEVWVNLACTYFFLGMYKQAEAAGFKAPKSRLQNRLLFHLAHKFNDEKKLMNFHQNLQDIKEDQLSLASIHYMRSHYQEAIDIYKRILLDNREYLALNVYVALCYYKLDYYDVSQEVLAVYLQQIPDSTIALNLKACNHFRLYNGKAAEAELKSLMDNASSPFEFAKELIRHNLVVFRGGEGALQVLPPLVDVIPEARLNLVIYYLRQDDVQEAYNLIKDLEPTTPQEYILKGVVNAALGQEMGSRDHMKIAQQFFQLVGGSASECDTIPGRQCMASCFFLLKQFDDVLIYLNSFKSYFYNDDIFNFNYAQAKAATGNTSEGEEVFLLIQSEKLKNDYIYLSWLARCYIMNKKPRLAWELYLKMETSGESFSLLQLIANDCYKMGQFYYSAKAFDVLERLDPNPEYWEGKRGACVGIFQMILAGREPKETLREVLHLLRSTGNTQVEYIIRIMKKWAKENRVPI</sequence>
<feature type="chain" id="PRO_0000289084" description="Intraflagellar transport protein 56">
    <location>
        <begin position="1"/>
        <end position="554"/>
    </location>
</feature>
<feature type="repeat" description="TPR 1">
    <location>
        <begin position="57"/>
        <end position="90"/>
    </location>
</feature>
<feature type="repeat" description="TPR 2">
    <location>
        <begin position="92"/>
        <end position="125"/>
    </location>
</feature>
<feature type="repeat" description="TPR 3">
    <location>
        <begin position="151"/>
        <end position="184"/>
    </location>
</feature>
<feature type="repeat" description="TPR 4">
    <location>
        <begin position="468"/>
        <end position="501"/>
    </location>
</feature>
<feature type="region of interest" description="Disordered" evidence="1">
    <location>
        <begin position="1"/>
        <end position="27"/>
    </location>
</feature>
<feature type="compositionally biased region" description="Basic residues" evidence="1">
    <location>
        <begin position="18"/>
        <end position="27"/>
    </location>
</feature>
<keyword id="KW-0966">Cell projection</keyword>
<keyword id="KW-0969">Cilium</keyword>
<keyword id="KW-0653">Protein transport</keyword>
<keyword id="KW-1185">Reference proteome</keyword>
<keyword id="KW-0677">Repeat</keyword>
<keyword id="KW-0802">TPR repeat</keyword>
<keyword id="KW-0813">Transport</keyword>
<comment type="function">
    <text evidence="2 4 5">Component of the intraflagellar transport (IFT) complex B required for transport of proteins in the motile cilium. Required for transport of specific ciliary cargo proteins related to motility, while it is neither required for IFT complex B assembly or motion nor for cilium assembly. Required for efficient coupling between the accumulation of GLI2 and GLI3 at the ciliary tips and their dissociation from the negative regulator SUFU (PubMed:22718903, PubMed:25340710). Plays a key role in maintaining the integrity of the IFT complex B and the proper ciliary localization of the IFT complex B components. Not required for IFT complex A ciliary localization or function. Essential for maintaining proper microtubule organization within the ciliary axoneme (PubMed:28264835).</text>
</comment>
<comment type="subunit">
    <text evidence="3">Component of the IFT complex B. Interacts with IFT46; the interaction is direct.</text>
</comment>
<comment type="subcellular location">
    <subcellularLocation>
        <location evidence="2 3">Cell projection</location>
        <location evidence="2 3">Cilium</location>
    </subcellularLocation>
    <text evidence="2 3">Localizes at the base to the ciliary transition zone.</text>
</comment>
<comment type="tissue specificity">
    <text evidence="2 4 6">High expression detected in testis. Detected also retina, kidney, lung and brain tissue. The expression level is low in spleen (PubMed:22718903). Expressed in the developing liver (PubMed:31595528). Present in the airway epithelial cells and the testes (at protein level) (PubMed:25340710).</text>
</comment>
<comment type="developmental stage">
    <text evidence="6">Expressed during early development stages (12.5 dpc, 13.5 dpc, and 14.5 dpc).</text>
</comment>
<comment type="disruption phenotype">
    <text evidence="4 5">Partial embryonic lethality and patterning defects. Surviving mice show hopping gait, polydactyly, hydrocephalus, and male sterility. Impaired hedgehog signaling. Primary cilia are not reduced in number and their length is normal (PubMed:25340710). Mice exhibit defective cilia structure, including abnormal positioning and number of ciliary microtubule doublets, abnormal localization of IFT complex B components and significantly reduced ciliary tip accumulation of proteins GLI2 and GLI3 (PubMed:28264835).</text>
</comment>
<comment type="similarity">
    <text evidence="9">Belongs to the IFT56 family.</text>
</comment>
<name>IFT56_MOUSE</name>
<gene>
    <name evidence="7" type="primary">Ift56</name>
    <name evidence="8" type="synonym">Hop</name>
    <name evidence="10" type="synonym">Ttc26</name>
</gene>
<organism>
    <name type="scientific">Mus musculus</name>
    <name type="common">Mouse</name>
    <dbReference type="NCBI Taxonomy" id="10090"/>
    <lineage>
        <taxon>Eukaryota</taxon>
        <taxon>Metazoa</taxon>
        <taxon>Chordata</taxon>
        <taxon>Craniata</taxon>
        <taxon>Vertebrata</taxon>
        <taxon>Euteleostomi</taxon>
        <taxon>Mammalia</taxon>
        <taxon>Eutheria</taxon>
        <taxon>Euarchontoglires</taxon>
        <taxon>Glires</taxon>
        <taxon>Rodentia</taxon>
        <taxon>Myomorpha</taxon>
        <taxon>Muroidea</taxon>
        <taxon>Muridae</taxon>
        <taxon>Murinae</taxon>
        <taxon>Mus</taxon>
        <taxon>Mus</taxon>
    </lineage>
</organism>
<evidence type="ECO:0000256" key="1">
    <source>
        <dbReference type="SAM" id="MobiDB-lite"/>
    </source>
</evidence>
<evidence type="ECO:0000269" key="2">
    <source>
    </source>
</evidence>
<evidence type="ECO:0000269" key="3">
    <source>
    </source>
</evidence>
<evidence type="ECO:0000269" key="4">
    <source>
    </source>
</evidence>
<evidence type="ECO:0000269" key="5">
    <source>
    </source>
</evidence>
<evidence type="ECO:0000269" key="6">
    <source>
    </source>
</evidence>
<evidence type="ECO:0000303" key="7">
    <source>
    </source>
</evidence>
<evidence type="ECO:0000303" key="8">
    <source>
    </source>
</evidence>
<evidence type="ECO:0000305" key="9"/>
<evidence type="ECO:0000312" key="10">
    <source>
        <dbReference type="MGI" id="MGI:2444853"/>
    </source>
</evidence>
<protein>
    <recommendedName>
        <fullName evidence="7">Intraflagellar transport protein 56</fullName>
    </recommendedName>
    <alternativeName>
        <fullName evidence="8">Protein hop-sterile</fullName>
    </alternativeName>
    <alternativeName>
        <fullName evidence="10">Tetratricopeptide repeat protein 26</fullName>
        <shortName evidence="10">TPR repeat protein 26</shortName>
    </alternativeName>
</protein>
<dbReference type="EMBL" id="AK035185">
    <property type="protein sequence ID" value="BAC28974.1"/>
    <property type="molecule type" value="mRNA"/>
</dbReference>
<dbReference type="EMBL" id="BC066060">
    <property type="protein sequence ID" value="AAH66060.1"/>
    <property type="molecule type" value="mRNA"/>
</dbReference>
<dbReference type="CCDS" id="CCDS51750.1"/>
<dbReference type="RefSeq" id="NP_705828.2">
    <property type="nucleotide sequence ID" value="NM_153600.2"/>
</dbReference>
<dbReference type="SMR" id="Q8BS45"/>
<dbReference type="BioGRID" id="234458">
    <property type="interactions" value="3"/>
</dbReference>
<dbReference type="ComplexPortal" id="CPX-5028">
    <property type="entry name" value="Intraflagellar transport complex B"/>
</dbReference>
<dbReference type="FunCoup" id="Q8BS45">
    <property type="interactions" value="548"/>
</dbReference>
<dbReference type="IntAct" id="Q8BS45">
    <property type="interactions" value="2"/>
</dbReference>
<dbReference type="MINT" id="Q8BS45"/>
<dbReference type="STRING" id="10090.ENSMUSP00000124369"/>
<dbReference type="iPTMnet" id="Q8BS45"/>
<dbReference type="PhosphoSitePlus" id="Q8BS45"/>
<dbReference type="SwissPalm" id="Q8BS45"/>
<dbReference type="jPOST" id="Q8BS45"/>
<dbReference type="PaxDb" id="10090-ENSMUSP00000124369"/>
<dbReference type="ProteomicsDB" id="267285"/>
<dbReference type="Pumba" id="Q8BS45"/>
<dbReference type="Antibodypedia" id="52471">
    <property type="antibodies" value="96 antibodies from 17 providers"/>
</dbReference>
<dbReference type="DNASU" id="264134"/>
<dbReference type="Ensembl" id="ENSMUST00000162554.8">
    <property type="protein sequence ID" value="ENSMUSP00000124369.2"/>
    <property type="gene ID" value="ENSMUSG00000056832.15"/>
</dbReference>
<dbReference type="GeneID" id="264134"/>
<dbReference type="KEGG" id="mmu:264134"/>
<dbReference type="UCSC" id="uc009bkc.1">
    <property type="organism name" value="mouse"/>
</dbReference>
<dbReference type="AGR" id="MGI:2444853"/>
<dbReference type="CTD" id="79989"/>
<dbReference type="MGI" id="MGI:2444853">
    <property type="gene designation" value="Ift56"/>
</dbReference>
<dbReference type="VEuPathDB" id="HostDB:ENSMUSG00000056832"/>
<dbReference type="eggNOG" id="KOG3785">
    <property type="taxonomic scope" value="Eukaryota"/>
</dbReference>
<dbReference type="GeneTree" id="ENSGT00390000000159"/>
<dbReference type="HOGENOM" id="CLU_036306_2_0_1"/>
<dbReference type="InParanoid" id="Q8BS45"/>
<dbReference type="OMA" id="FIIRRDY"/>
<dbReference type="OrthoDB" id="95390at2759"/>
<dbReference type="PhylomeDB" id="Q8BS45"/>
<dbReference type="TreeFam" id="TF105816"/>
<dbReference type="Reactome" id="R-MMU-5620924">
    <property type="pathway name" value="Intraflagellar transport"/>
</dbReference>
<dbReference type="BioGRID-ORCS" id="264134">
    <property type="hits" value="4 hits in 77 CRISPR screens"/>
</dbReference>
<dbReference type="ChiTaRS" id="Ttc26">
    <property type="organism name" value="mouse"/>
</dbReference>
<dbReference type="PRO" id="PR:Q8BS45"/>
<dbReference type="Proteomes" id="UP000000589">
    <property type="component" value="Chromosome 6"/>
</dbReference>
<dbReference type="RNAct" id="Q8BS45">
    <property type="molecule type" value="protein"/>
</dbReference>
<dbReference type="Bgee" id="ENSMUSG00000056832">
    <property type="expression patterns" value="Expressed in spermatocyte and 199 other cell types or tissues"/>
</dbReference>
<dbReference type="ExpressionAtlas" id="Q8BS45">
    <property type="expression patterns" value="baseline and differential"/>
</dbReference>
<dbReference type="GO" id="GO:0005813">
    <property type="term" value="C:centrosome"/>
    <property type="evidence" value="ECO:0000314"/>
    <property type="project" value="MGI"/>
</dbReference>
<dbReference type="GO" id="GO:0036064">
    <property type="term" value="C:ciliary basal body"/>
    <property type="evidence" value="ECO:0000314"/>
    <property type="project" value="UniProtKB"/>
</dbReference>
<dbReference type="GO" id="GO:0005929">
    <property type="term" value="C:cilium"/>
    <property type="evidence" value="ECO:0000314"/>
    <property type="project" value="UniProtKB"/>
</dbReference>
<dbReference type="GO" id="GO:0030992">
    <property type="term" value="C:intraciliary transport particle B"/>
    <property type="evidence" value="ECO:0000314"/>
    <property type="project" value="UniProtKB"/>
</dbReference>
<dbReference type="GO" id="GO:0043005">
    <property type="term" value="C:neuron projection"/>
    <property type="evidence" value="ECO:0000314"/>
    <property type="project" value="MGI"/>
</dbReference>
<dbReference type="GO" id="GO:0120170">
    <property type="term" value="F:intraciliary transport particle B binding"/>
    <property type="evidence" value="ECO:0000314"/>
    <property type="project" value="MGI"/>
</dbReference>
<dbReference type="GO" id="GO:0035082">
    <property type="term" value="P:axoneme assembly"/>
    <property type="evidence" value="ECO:0000315"/>
    <property type="project" value="UniProtKB"/>
</dbReference>
<dbReference type="GO" id="GO:0060271">
    <property type="term" value="P:cilium assembly"/>
    <property type="evidence" value="ECO:0000315"/>
    <property type="project" value="UniProtKB"/>
</dbReference>
<dbReference type="GO" id="GO:0035720">
    <property type="term" value="P:intraciliary anterograde transport"/>
    <property type="evidence" value="ECO:0000303"/>
    <property type="project" value="ComplexPortal"/>
</dbReference>
<dbReference type="GO" id="GO:0042073">
    <property type="term" value="P:intraciliary transport"/>
    <property type="evidence" value="ECO:0000315"/>
    <property type="project" value="UniProtKB"/>
</dbReference>
<dbReference type="GO" id="GO:1905198">
    <property type="term" value="P:manchette assembly"/>
    <property type="evidence" value="ECO:0000315"/>
    <property type="project" value="MGI"/>
</dbReference>
<dbReference type="GO" id="GO:0046530">
    <property type="term" value="P:photoreceptor cell differentiation"/>
    <property type="evidence" value="ECO:0000266"/>
    <property type="project" value="MGI"/>
</dbReference>
<dbReference type="GO" id="GO:0008594">
    <property type="term" value="P:photoreceptor cell morphogenesis"/>
    <property type="evidence" value="ECO:0000266"/>
    <property type="project" value="MGI"/>
</dbReference>
<dbReference type="GO" id="GO:0061512">
    <property type="term" value="P:protein localization to cilium"/>
    <property type="evidence" value="ECO:0000315"/>
    <property type="project" value="UniProtKB"/>
</dbReference>
<dbReference type="GO" id="GO:0015031">
    <property type="term" value="P:protein transport"/>
    <property type="evidence" value="ECO:0007669"/>
    <property type="project" value="UniProtKB-KW"/>
</dbReference>
<dbReference type="GO" id="GO:0007224">
    <property type="term" value="P:smoothened signaling pathway"/>
    <property type="evidence" value="ECO:0000315"/>
    <property type="project" value="UniProtKB"/>
</dbReference>
<dbReference type="GO" id="GO:0007286">
    <property type="term" value="P:spermatid development"/>
    <property type="evidence" value="ECO:0000315"/>
    <property type="project" value="MGI"/>
</dbReference>
<dbReference type="FunFam" id="1.25.40.10:FF:000588">
    <property type="entry name" value="Intraflagellar transport protein 56"/>
    <property type="match status" value="1"/>
</dbReference>
<dbReference type="FunFam" id="1.25.40.10:FF:000136">
    <property type="entry name" value="Tetratricopeptide repeat domain 26"/>
    <property type="match status" value="1"/>
</dbReference>
<dbReference type="FunFam" id="1.25.40.10:FF:000271">
    <property type="entry name" value="Tetratricopeptide repeat domain 26"/>
    <property type="match status" value="1"/>
</dbReference>
<dbReference type="Gene3D" id="1.25.40.10">
    <property type="entry name" value="Tetratricopeptide repeat domain"/>
    <property type="match status" value="3"/>
</dbReference>
<dbReference type="InterPro" id="IPR011990">
    <property type="entry name" value="TPR-like_helical_dom_sf"/>
</dbReference>
<dbReference type="InterPro" id="IPR030511">
    <property type="entry name" value="TTC26"/>
</dbReference>
<dbReference type="PANTHER" id="PTHR14781">
    <property type="entry name" value="INTRAFLAGELLAR TRANSPORT PROTEIN 56"/>
    <property type="match status" value="1"/>
</dbReference>
<dbReference type="PANTHER" id="PTHR14781:SF0">
    <property type="entry name" value="INTRAFLAGELLAR TRANSPORT PROTEIN 56"/>
    <property type="match status" value="1"/>
</dbReference>
<dbReference type="Pfam" id="PF12895">
    <property type="entry name" value="ANAPC3"/>
    <property type="match status" value="1"/>
</dbReference>
<dbReference type="SUPFAM" id="SSF48452">
    <property type="entry name" value="TPR-like"/>
    <property type="match status" value="3"/>
</dbReference>
<dbReference type="PROSITE" id="PS50293">
    <property type="entry name" value="TPR_REGION"/>
    <property type="match status" value="2"/>
</dbReference>
<accession>Q8BS45</accession>
<proteinExistence type="evidence at protein level"/>
<reference key="1">
    <citation type="journal article" date="2005" name="Science">
        <title>The transcriptional landscape of the mammalian genome.</title>
        <authorList>
            <person name="Carninci P."/>
            <person name="Kasukawa T."/>
            <person name="Katayama S."/>
            <person name="Gough J."/>
            <person name="Frith M.C."/>
            <person name="Maeda N."/>
            <person name="Oyama R."/>
            <person name="Ravasi T."/>
            <person name="Lenhard B."/>
            <person name="Wells C."/>
            <person name="Kodzius R."/>
            <person name="Shimokawa K."/>
            <person name="Bajic V.B."/>
            <person name="Brenner S.E."/>
            <person name="Batalov S."/>
            <person name="Forrest A.R."/>
            <person name="Zavolan M."/>
            <person name="Davis M.J."/>
            <person name="Wilming L.G."/>
            <person name="Aidinis V."/>
            <person name="Allen J.E."/>
            <person name="Ambesi-Impiombato A."/>
            <person name="Apweiler R."/>
            <person name="Aturaliya R.N."/>
            <person name="Bailey T.L."/>
            <person name="Bansal M."/>
            <person name="Baxter L."/>
            <person name="Beisel K.W."/>
            <person name="Bersano T."/>
            <person name="Bono H."/>
            <person name="Chalk A.M."/>
            <person name="Chiu K.P."/>
            <person name="Choudhary V."/>
            <person name="Christoffels A."/>
            <person name="Clutterbuck D.R."/>
            <person name="Crowe M.L."/>
            <person name="Dalla E."/>
            <person name="Dalrymple B.P."/>
            <person name="de Bono B."/>
            <person name="Della Gatta G."/>
            <person name="di Bernardo D."/>
            <person name="Down T."/>
            <person name="Engstrom P."/>
            <person name="Fagiolini M."/>
            <person name="Faulkner G."/>
            <person name="Fletcher C.F."/>
            <person name="Fukushima T."/>
            <person name="Furuno M."/>
            <person name="Futaki S."/>
            <person name="Gariboldi M."/>
            <person name="Georgii-Hemming P."/>
            <person name="Gingeras T.R."/>
            <person name="Gojobori T."/>
            <person name="Green R.E."/>
            <person name="Gustincich S."/>
            <person name="Harbers M."/>
            <person name="Hayashi Y."/>
            <person name="Hensch T.K."/>
            <person name="Hirokawa N."/>
            <person name="Hill D."/>
            <person name="Huminiecki L."/>
            <person name="Iacono M."/>
            <person name="Ikeo K."/>
            <person name="Iwama A."/>
            <person name="Ishikawa T."/>
            <person name="Jakt M."/>
            <person name="Kanapin A."/>
            <person name="Katoh M."/>
            <person name="Kawasawa Y."/>
            <person name="Kelso J."/>
            <person name="Kitamura H."/>
            <person name="Kitano H."/>
            <person name="Kollias G."/>
            <person name="Krishnan S.P."/>
            <person name="Kruger A."/>
            <person name="Kummerfeld S.K."/>
            <person name="Kurochkin I.V."/>
            <person name="Lareau L.F."/>
            <person name="Lazarevic D."/>
            <person name="Lipovich L."/>
            <person name="Liu J."/>
            <person name="Liuni S."/>
            <person name="McWilliam S."/>
            <person name="Madan Babu M."/>
            <person name="Madera M."/>
            <person name="Marchionni L."/>
            <person name="Matsuda H."/>
            <person name="Matsuzawa S."/>
            <person name="Miki H."/>
            <person name="Mignone F."/>
            <person name="Miyake S."/>
            <person name="Morris K."/>
            <person name="Mottagui-Tabar S."/>
            <person name="Mulder N."/>
            <person name="Nakano N."/>
            <person name="Nakauchi H."/>
            <person name="Ng P."/>
            <person name="Nilsson R."/>
            <person name="Nishiguchi S."/>
            <person name="Nishikawa S."/>
            <person name="Nori F."/>
            <person name="Ohara O."/>
            <person name="Okazaki Y."/>
            <person name="Orlando V."/>
            <person name="Pang K.C."/>
            <person name="Pavan W.J."/>
            <person name="Pavesi G."/>
            <person name="Pesole G."/>
            <person name="Petrovsky N."/>
            <person name="Piazza S."/>
            <person name="Reed J."/>
            <person name="Reid J.F."/>
            <person name="Ring B.Z."/>
            <person name="Ringwald M."/>
            <person name="Rost B."/>
            <person name="Ruan Y."/>
            <person name="Salzberg S.L."/>
            <person name="Sandelin A."/>
            <person name="Schneider C."/>
            <person name="Schoenbach C."/>
            <person name="Sekiguchi K."/>
            <person name="Semple C.A."/>
            <person name="Seno S."/>
            <person name="Sessa L."/>
            <person name="Sheng Y."/>
            <person name="Shibata Y."/>
            <person name="Shimada H."/>
            <person name="Shimada K."/>
            <person name="Silva D."/>
            <person name="Sinclair B."/>
            <person name="Sperling S."/>
            <person name="Stupka E."/>
            <person name="Sugiura K."/>
            <person name="Sultana R."/>
            <person name="Takenaka Y."/>
            <person name="Taki K."/>
            <person name="Tammoja K."/>
            <person name="Tan S.L."/>
            <person name="Tang S."/>
            <person name="Taylor M.S."/>
            <person name="Tegner J."/>
            <person name="Teichmann S.A."/>
            <person name="Ueda H.R."/>
            <person name="van Nimwegen E."/>
            <person name="Verardo R."/>
            <person name="Wei C.L."/>
            <person name="Yagi K."/>
            <person name="Yamanishi H."/>
            <person name="Zabarovsky E."/>
            <person name="Zhu S."/>
            <person name="Zimmer A."/>
            <person name="Hide W."/>
            <person name="Bult C."/>
            <person name="Grimmond S.M."/>
            <person name="Teasdale R.D."/>
            <person name="Liu E.T."/>
            <person name="Brusic V."/>
            <person name="Quackenbush J."/>
            <person name="Wahlestedt C."/>
            <person name="Mattick J.S."/>
            <person name="Hume D.A."/>
            <person name="Kai C."/>
            <person name="Sasaki D."/>
            <person name="Tomaru Y."/>
            <person name="Fukuda S."/>
            <person name="Kanamori-Katayama M."/>
            <person name="Suzuki M."/>
            <person name="Aoki J."/>
            <person name="Arakawa T."/>
            <person name="Iida J."/>
            <person name="Imamura K."/>
            <person name="Itoh M."/>
            <person name="Kato T."/>
            <person name="Kawaji H."/>
            <person name="Kawagashira N."/>
            <person name="Kawashima T."/>
            <person name="Kojima M."/>
            <person name="Kondo S."/>
            <person name="Konno H."/>
            <person name="Nakano K."/>
            <person name="Ninomiya N."/>
            <person name="Nishio T."/>
            <person name="Okada M."/>
            <person name="Plessy C."/>
            <person name="Shibata K."/>
            <person name="Shiraki T."/>
            <person name="Suzuki S."/>
            <person name="Tagami M."/>
            <person name="Waki K."/>
            <person name="Watahiki A."/>
            <person name="Okamura-Oho Y."/>
            <person name="Suzuki H."/>
            <person name="Kawai J."/>
            <person name="Hayashizaki Y."/>
        </authorList>
    </citation>
    <scope>NUCLEOTIDE SEQUENCE [LARGE SCALE MRNA]</scope>
    <source>
        <strain>C57BL/6J</strain>
        <tissue>Embryo</tissue>
    </source>
</reference>
<reference key="2">
    <citation type="journal article" date="2004" name="Genome Res.">
        <title>The status, quality, and expansion of the NIH full-length cDNA project: the Mammalian Gene Collection (MGC).</title>
        <authorList>
            <consortium name="The MGC Project Team"/>
        </authorList>
    </citation>
    <scope>NUCLEOTIDE SEQUENCE [LARGE SCALE MRNA]</scope>
    <source>
        <strain>C57BL/6J</strain>
        <tissue>Brain</tissue>
    </source>
</reference>
<reference key="3">
    <citation type="journal article" date="2010" name="Cell">
        <title>A tissue-specific atlas of mouse protein phosphorylation and expression.</title>
        <authorList>
            <person name="Huttlin E.L."/>
            <person name="Jedrychowski M.P."/>
            <person name="Elias J.E."/>
            <person name="Goswami T."/>
            <person name="Rad R."/>
            <person name="Beausoleil S.A."/>
            <person name="Villen J."/>
            <person name="Haas W."/>
            <person name="Sowa M.E."/>
            <person name="Gygi S.P."/>
        </authorList>
    </citation>
    <scope>IDENTIFICATION BY MASS SPECTROMETRY [LARGE SCALE ANALYSIS]</scope>
    <source>
        <tissue>Pancreas</tissue>
        <tissue>Testis</tissue>
    </source>
</reference>
<reference key="4">
    <citation type="journal article" date="2012" name="Mol. Biol. Cell">
        <title>Knockdown of ttc26 disrupts ciliogenesis of the photoreceptor cells and the pronephros in zebrafish.</title>
        <authorList>
            <person name="Zhang Q."/>
            <person name="Liu Q."/>
            <person name="Austin C."/>
            <person name="Drummond I."/>
            <person name="Pierce E.A."/>
        </authorList>
    </citation>
    <scope>TISSUE SPECIFICITY</scope>
    <scope>FUNCTION</scope>
    <scope>SUBCELLULAR LOCATION</scope>
</reference>
<reference key="5">
    <citation type="journal article" date="2014" name="Elife">
        <title>TTC26/DYF13 is an intraflagellar transport protein required for transport of motility-related proteins into flagella.</title>
        <authorList>
            <person name="Ishikawa H."/>
            <person name="Ide T."/>
            <person name="Yagi T."/>
            <person name="Jiang X."/>
            <person name="Hirono M."/>
            <person name="Sasaki H."/>
            <person name="Yanagisawa H."/>
            <person name="Wemmer K.A."/>
            <person name="Stainier D.Y."/>
            <person name="Qin H."/>
            <person name="Kamiya R."/>
            <person name="Marshall W.F."/>
        </authorList>
    </citation>
    <scope>SUBCELLULAR LOCATION</scope>
    <scope>IDENTIFICATION IN THE IFT COMPLEX B</scope>
</reference>
<reference key="6">
    <citation type="journal article" date="2014" name="Elife">
        <authorList>
            <person name="Ishikawa H."/>
            <person name="Ide T."/>
            <person name="Yagi T."/>
            <person name="Jiang X."/>
            <person name="Hirono M."/>
            <person name="Sasaki H."/>
            <person name="Yanagisawa H."/>
            <person name="Wemmer K.A."/>
            <person name="Stainier D.Y."/>
            <person name="Qin H."/>
            <person name="Kamiya R."/>
            <person name="Marshall W.F."/>
        </authorList>
    </citation>
    <scope>ERRATUM OF PUBMED:24596149</scope>
</reference>
<reference key="7">
    <citation type="journal article" date="2014" name="PLoS Genet.">
        <title>A mutation in the mouse ttc26 gene leads to impaired hedgehog signaling.</title>
        <authorList>
            <person name="Swiderski R.E."/>
            <person name="Nakano Y."/>
            <person name="Mullins R.F."/>
            <person name="Seo S."/>
            <person name="Banfi B."/>
        </authorList>
    </citation>
    <scope>FUNCTION</scope>
    <scope>TISSUE SPECIFICITY</scope>
    <scope>DISRUPTION PHENOTYPE</scope>
    <scope>IDENTIFICATION IN THE IFT COMPLEX B</scope>
    <scope>INTERACTION WITH IFT46</scope>
</reference>
<reference key="8">
    <citation type="journal article" date="2017" name="Development">
        <title>IFT56 regulates vertebrate developmental patterning by maintaining IFTB complex integrity and ciliary microtubule architecture.</title>
        <authorList>
            <person name="Xin D."/>
            <person name="Christopher K.J."/>
            <person name="Zeng L."/>
            <person name="Kong Y."/>
            <person name="Weatherbee S.D."/>
        </authorList>
    </citation>
    <scope>FUNCTION</scope>
    <scope>DISRUPTION PHENOTYPE</scope>
</reference>
<reference key="9">
    <citation type="journal article" date="2020" name="Hepatology">
        <title>Biallelic Mutations in Tetratricopeptide Repeat Domain 26 (Intraflagellar Transport 56) Cause Severe Biliary Ciliopathy in Humans.</title>
        <authorList>
            <person name="Shaheen R."/>
            <person name="Alsahli S."/>
            <person name="Ewida N."/>
            <person name="Alzahrani F."/>
            <person name="Shamseldin H.E."/>
            <person name="Patel N."/>
            <person name="Al Qahtani A."/>
            <person name="Alhebbi H."/>
            <person name="Alhashem A."/>
            <person name="Al-Sheddi T."/>
            <person name="Alomar R."/>
            <person name="Alobeid E."/>
            <person name="Abouelhoda M."/>
            <person name="Monies D."/>
            <person name="Al-Hussaini A."/>
            <person name="Alzouman M.A."/>
            <person name="Shagrani M."/>
            <person name="Faqeih E."/>
            <person name="Alkuraya F.S."/>
        </authorList>
    </citation>
    <scope>DEVELOPMENTAL STAGE</scope>
    <scope>TISSUE SPECIFICITY</scope>
</reference>